<protein>
    <recommendedName>
        <fullName>Leucine rich adaptor protein 1-like</fullName>
    </recommendedName>
</protein>
<accession>Q8K2P1</accession>
<accession>A2AQI1</accession>
<accession>Q9D150</accession>
<keyword id="KW-0007">Acetylation</keyword>
<keyword id="KW-1185">Reference proteome</keyword>
<sequence>MEDSPLPDLRDIELKLGRKVPESLARSLRGEELAPREGAADPSGVGGSCSSSSSCSSFAPSVSSSSSSSPASGSPRRSHPSALERLETKLHILRQEMVNLRATDVRLMRQLLLINESIESIKWMIEEKATITSRGSSLSGSLCSLLESQSTSLRGSYNSLHDGSDGLDGISVGSYLDTLADDVPGHQTPSDLDQFSDSSIIEDSQALHKHPKLDSEYYCFG</sequence>
<comment type="sequence caution" evidence="3">
    <conflict type="frameshift">
        <sequence resource="EMBL-CDS" id="BAB23088"/>
    </conflict>
</comment>
<dbReference type="EMBL" id="AL844604">
    <property type="status" value="NOT_ANNOTATED_CDS"/>
    <property type="molecule type" value="Genomic_DNA"/>
</dbReference>
<dbReference type="EMBL" id="BC021501">
    <property type="protein sequence ID" value="AAH21501.2"/>
    <property type="molecule type" value="mRNA"/>
</dbReference>
<dbReference type="EMBL" id="BC030404">
    <property type="protein sequence ID" value="AAH30404.1"/>
    <property type="molecule type" value="mRNA"/>
</dbReference>
<dbReference type="EMBL" id="AK003950">
    <property type="protein sequence ID" value="BAB23088.1"/>
    <property type="status" value="ALT_FRAME"/>
    <property type="molecule type" value="mRNA"/>
</dbReference>
<dbReference type="CCDS" id="CCDS18291.1"/>
<dbReference type="RefSeq" id="NP_081097.2">
    <property type="nucleotide sequence ID" value="NM_026821.5"/>
</dbReference>
<dbReference type="SMR" id="Q8K2P1"/>
<dbReference type="FunCoup" id="Q8K2P1">
    <property type="interactions" value="7"/>
</dbReference>
<dbReference type="STRING" id="10090.ENSMUSP00000062628"/>
<dbReference type="iPTMnet" id="Q8K2P1"/>
<dbReference type="PhosphoSitePlus" id="Q8K2P1"/>
<dbReference type="PaxDb" id="10090-ENSMUSP00000062628"/>
<dbReference type="ProteomicsDB" id="291968"/>
<dbReference type="Pumba" id="Q8K2P1"/>
<dbReference type="Antibodypedia" id="24398">
    <property type="antibodies" value="84 antibodies from 15 providers"/>
</dbReference>
<dbReference type="Ensembl" id="ENSMUST00000055922.4">
    <property type="protein sequence ID" value="ENSMUSP00000062628.4"/>
    <property type="gene ID" value="ENSMUSG00000048706.4"/>
</dbReference>
<dbReference type="GeneID" id="52829"/>
<dbReference type="KEGG" id="mmu:52829"/>
<dbReference type="UCSC" id="uc008tjv.1">
    <property type="organism name" value="mouse"/>
</dbReference>
<dbReference type="AGR" id="MGI:106510"/>
<dbReference type="CTD" id="286343"/>
<dbReference type="MGI" id="MGI:106510">
    <property type="gene designation" value="Lurap1l"/>
</dbReference>
<dbReference type="VEuPathDB" id="HostDB:ENSMUSG00000048706"/>
<dbReference type="eggNOG" id="ENOG502QU2C">
    <property type="taxonomic scope" value="Eukaryota"/>
</dbReference>
<dbReference type="GeneTree" id="ENSGT00530000063790"/>
<dbReference type="HOGENOM" id="CLU_106332_1_0_1"/>
<dbReference type="InParanoid" id="Q8K2P1"/>
<dbReference type="OMA" id="QPLHKHP"/>
<dbReference type="OrthoDB" id="6508726at2759"/>
<dbReference type="PhylomeDB" id="Q8K2P1"/>
<dbReference type="TreeFam" id="TF332089"/>
<dbReference type="BioGRID-ORCS" id="52829">
    <property type="hits" value="3 hits in 76 CRISPR screens"/>
</dbReference>
<dbReference type="ChiTaRS" id="Lurap1l">
    <property type="organism name" value="mouse"/>
</dbReference>
<dbReference type="PRO" id="PR:Q8K2P1"/>
<dbReference type="Proteomes" id="UP000000589">
    <property type="component" value="Chromosome 4"/>
</dbReference>
<dbReference type="RNAct" id="Q8K2P1">
    <property type="molecule type" value="protein"/>
</dbReference>
<dbReference type="Bgee" id="ENSMUSG00000048706">
    <property type="expression patterns" value="Expressed in left colon and 211 other cell types or tissues"/>
</dbReference>
<dbReference type="GO" id="GO:0043123">
    <property type="term" value="P:positive regulation of canonical NF-kappaB signal transduction"/>
    <property type="evidence" value="ECO:0007669"/>
    <property type="project" value="InterPro"/>
</dbReference>
<dbReference type="InterPro" id="IPR039499">
    <property type="entry name" value="LURA1/LRA25"/>
</dbReference>
<dbReference type="InterPro" id="IPR037443">
    <property type="entry name" value="LURAP1"/>
</dbReference>
<dbReference type="PANTHER" id="PTHR33767">
    <property type="entry name" value="LEUCINE RICH ADAPTOR PROTEIN 1-LIKE"/>
    <property type="match status" value="1"/>
</dbReference>
<dbReference type="PANTHER" id="PTHR33767:SF1">
    <property type="entry name" value="LEUCINE RICH ADAPTOR PROTEIN 1-LIKE"/>
    <property type="match status" value="1"/>
</dbReference>
<dbReference type="Pfam" id="PF14854">
    <property type="entry name" value="LURAP"/>
    <property type="match status" value="1"/>
</dbReference>
<reference key="1">
    <citation type="journal article" date="2009" name="PLoS Biol.">
        <title>Lineage-specific biology revealed by a finished genome assembly of the mouse.</title>
        <authorList>
            <person name="Church D.M."/>
            <person name="Goodstadt L."/>
            <person name="Hillier L.W."/>
            <person name="Zody M.C."/>
            <person name="Goldstein S."/>
            <person name="She X."/>
            <person name="Bult C.J."/>
            <person name="Agarwala R."/>
            <person name="Cherry J.L."/>
            <person name="DiCuccio M."/>
            <person name="Hlavina W."/>
            <person name="Kapustin Y."/>
            <person name="Meric P."/>
            <person name="Maglott D."/>
            <person name="Birtle Z."/>
            <person name="Marques A.C."/>
            <person name="Graves T."/>
            <person name="Zhou S."/>
            <person name="Teague B."/>
            <person name="Potamousis K."/>
            <person name="Churas C."/>
            <person name="Place M."/>
            <person name="Herschleb J."/>
            <person name="Runnheim R."/>
            <person name="Forrest D."/>
            <person name="Amos-Landgraf J."/>
            <person name="Schwartz D.C."/>
            <person name="Cheng Z."/>
            <person name="Lindblad-Toh K."/>
            <person name="Eichler E.E."/>
            <person name="Ponting C.P."/>
        </authorList>
    </citation>
    <scope>NUCLEOTIDE SEQUENCE [LARGE SCALE GENOMIC DNA]</scope>
    <source>
        <strain>C57BL/6J</strain>
    </source>
</reference>
<reference key="2">
    <citation type="journal article" date="2004" name="Genome Res.">
        <title>The status, quality, and expansion of the NIH full-length cDNA project: the Mammalian Gene Collection (MGC).</title>
        <authorList>
            <consortium name="The MGC Project Team"/>
        </authorList>
    </citation>
    <scope>NUCLEOTIDE SEQUENCE [LARGE SCALE MRNA]</scope>
    <source>
        <strain>FVB/N</strain>
        <tissue>Mammary tumor</tissue>
    </source>
</reference>
<reference key="3">
    <citation type="journal article" date="2005" name="Science">
        <title>The transcriptional landscape of the mammalian genome.</title>
        <authorList>
            <person name="Carninci P."/>
            <person name="Kasukawa T."/>
            <person name="Katayama S."/>
            <person name="Gough J."/>
            <person name="Frith M.C."/>
            <person name="Maeda N."/>
            <person name="Oyama R."/>
            <person name="Ravasi T."/>
            <person name="Lenhard B."/>
            <person name="Wells C."/>
            <person name="Kodzius R."/>
            <person name="Shimokawa K."/>
            <person name="Bajic V.B."/>
            <person name="Brenner S.E."/>
            <person name="Batalov S."/>
            <person name="Forrest A.R."/>
            <person name="Zavolan M."/>
            <person name="Davis M.J."/>
            <person name="Wilming L.G."/>
            <person name="Aidinis V."/>
            <person name="Allen J.E."/>
            <person name="Ambesi-Impiombato A."/>
            <person name="Apweiler R."/>
            <person name="Aturaliya R.N."/>
            <person name="Bailey T.L."/>
            <person name="Bansal M."/>
            <person name="Baxter L."/>
            <person name="Beisel K.W."/>
            <person name="Bersano T."/>
            <person name="Bono H."/>
            <person name="Chalk A.M."/>
            <person name="Chiu K.P."/>
            <person name="Choudhary V."/>
            <person name="Christoffels A."/>
            <person name="Clutterbuck D.R."/>
            <person name="Crowe M.L."/>
            <person name="Dalla E."/>
            <person name="Dalrymple B.P."/>
            <person name="de Bono B."/>
            <person name="Della Gatta G."/>
            <person name="di Bernardo D."/>
            <person name="Down T."/>
            <person name="Engstrom P."/>
            <person name="Fagiolini M."/>
            <person name="Faulkner G."/>
            <person name="Fletcher C.F."/>
            <person name="Fukushima T."/>
            <person name="Furuno M."/>
            <person name="Futaki S."/>
            <person name="Gariboldi M."/>
            <person name="Georgii-Hemming P."/>
            <person name="Gingeras T.R."/>
            <person name="Gojobori T."/>
            <person name="Green R.E."/>
            <person name="Gustincich S."/>
            <person name="Harbers M."/>
            <person name="Hayashi Y."/>
            <person name="Hensch T.K."/>
            <person name="Hirokawa N."/>
            <person name="Hill D."/>
            <person name="Huminiecki L."/>
            <person name="Iacono M."/>
            <person name="Ikeo K."/>
            <person name="Iwama A."/>
            <person name="Ishikawa T."/>
            <person name="Jakt M."/>
            <person name="Kanapin A."/>
            <person name="Katoh M."/>
            <person name="Kawasawa Y."/>
            <person name="Kelso J."/>
            <person name="Kitamura H."/>
            <person name="Kitano H."/>
            <person name="Kollias G."/>
            <person name="Krishnan S.P."/>
            <person name="Kruger A."/>
            <person name="Kummerfeld S.K."/>
            <person name="Kurochkin I.V."/>
            <person name="Lareau L.F."/>
            <person name="Lazarevic D."/>
            <person name="Lipovich L."/>
            <person name="Liu J."/>
            <person name="Liuni S."/>
            <person name="McWilliam S."/>
            <person name="Madan Babu M."/>
            <person name="Madera M."/>
            <person name="Marchionni L."/>
            <person name="Matsuda H."/>
            <person name="Matsuzawa S."/>
            <person name="Miki H."/>
            <person name="Mignone F."/>
            <person name="Miyake S."/>
            <person name="Morris K."/>
            <person name="Mottagui-Tabar S."/>
            <person name="Mulder N."/>
            <person name="Nakano N."/>
            <person name="Nakauchi H."/>
            <person name="Ng P."/>
            <person name="Nilsson R."/>
            <person name="Nishiguchi S."/>
            <person name="Nishikawa S."/>
            <person name="Nori F."/>
            <person name="Ohara O."/>
            <person name="Okazaki Y."/>
            <person name="Orlando V."/>
            <person name="Pang K.C."/>
            <person name="Pavan W.J."/>
            <person name="Pavesi G."/>
            <person name="Pesole G."/>
            <person name="Petrovsky N."/>
            <person name="Piazza S."/>
            <person name="Reed J."/>
            <person name="Reid J.F."/>
            <person name="Ring B.Z."/>
            <person name="Ringwald M."/>
            <person name="Rost B."/>
            <person name="Ruan Y."/>
            <person name="Salzberg S.L."/>
            <person name="Sandelin A."/>
            <person name="Schneider C."/>
            <person name="Schoenbach C."/>
            <person name="Sekiguchi K."/>
            <person name="Semple C.A."/>
            <person name="Seno S."/>
            <person name="Sessa L."/>
            <person name="Sheng Y."/>
            <person name="Shibata Y."/>
            <person name="Shimada H."/>
            <person name="Shimada K."/>
            <person name="Silva D."/>
            <person name="Sinclair B."/>
            <person name="Sperling S."/>
            <person name="Stupka E."/>
            <person name="Sugiura K."/>
            <person name="Sultana R."/>
            <person name="Takenaka Y."/>
            <person name="Taki K."/>
            <person name="Tammoja K."/>
            <person name="Tan S.L."/>
            <person name="Tang S."/>
            <person name="Taylor M.S."/>
            <person name="Tegner J."/>
            <person name="Teichmann S.A."/>
            <person name="Ueda H.R."/>
            <person name="van Nimwegen E."/>
            <person name="Verardo R."/>
            <person name="Wei C.L."/>
            <person name="Yagi K."/>
            <person name="Yamanishi H."/>
            <person name="Zabarovsky E."/>
            <person name="Zhu S."/>
            <person name="Zimmer A."/>
            <person name="Hide W."/>
            <person name="Bult C."/>
            <person name="Grimmond S.M."/>
            <person name="Teasdale R.D."/>
            <person name="Liu E.T."/>
            <person name="Brusic V."/>
            <person name="Quackenbush J."/>
            <person name="Wahlestedt C."/>
            <person name="Mattick J.S."/>
            <person name="Hume D.A."/>
            <person name="Kai C."/>
            <person name="Sasaki D."/>
            <person name="Tomaru Y."/>
            <person name="Fukuda S."/>
            <person name="Kanamori-Katayama M."/>
            <person name="Suzuki M."/>
            <person name="Aoki J."/>
            <person name="Arakawa T."/>
            <person name="Iida J."/>
            <person name="Imamura K."/>
            <person name="Itoh M."/>
            <person name="Kato T."/>
            <person name="Kawaji H."/>
            <person name="Kawagashira N."/>
            <person name="Kawashima T."/>
            <person name="Kojima M."/>
            <person name="Kondo S."/>
            <person name="Konno H."/>
            <person name="Nakano K."/>
            <person name="Ninomiya N."/>
            <person name="Nishio T."/>
            <person name="Okada M."/>
            <person name="Plessy C."/>
            <person name="Shibata K."/>
            <person name="Shiraki T."/>
            <person name="Suzuki S."/>
            <person name="Tagami M."/>
            <person name="Waki K."/>
            <person name="Watahiki A."/>
            <person name="Okamura-Oho Y."/>
            <person name="Suzuki H."/>
            <person name="Kawai J."/>
            <person name="Hayashizaki Y."/>
        </authorList>
    </citation>
    <scope>NUCLEOTIDE SEQUENCE [LARGE SCALE MRNA] OF 9-221</scope>
    <source>
        <strain>C57BL/6J</strain>
        <tissue>Embryo</tissue>
    </source>
</reference>
<reference key="4">
    <citation type="journal article" date="2007" name="Proc. Natl. Acad. Sci. U.S.A.">
        <title>Large-scale phosphorylation analysis of mouse liver.</title>
        <authorList>
            <person name="Villen J."/>
            <person name="Beausoleil S.A."/>
            <person name="Gerber S.A."/>
            <person name="Gygi S.P."/>
        </authorList>
    </citation>
    <scope>IDENTIFICATION BY MASS SPECTROMETRY [LARGE SCALE ANALYSIS]</scope>
    <source>
        <tissue>Liver</tissue>
    </source>
</reference>
<feature type="chain" id="PRO_0000089741" description="Leucine rich adaptor protein 1-like">
    <location>
        <begin position="1"/>
        <end position="221"/>
    </location>
</feature>
<feature type="region of interest" description="Disordered" evidence="2">
    <location>
        <begin position="24"/>
        <end position="81"/>
    </location>
</feature>
<feature type="compositionally biased region" description="Basic and acidic residues" evidence="2">
    <location>
        <begin position="28"/>
        <end position="39"/>
    </location>
</feature>
<feature type="compositionally biased region" description="Low complexity" evidence="2">
    <location>
        <begin position="48"/>
        <end position="75"/>
    </location>
</feature>
<feature type="modified residue" description="N-acetylmethionine" evidence="1">
    <location>
        <position position="1"/>
    </location>
</feature>
<feature type="sequence conflict" description="In Ref. 3; BAB23088." evidence="3" ref="3">
    <original>I</original>
    <variation>L</variation>
    <location>
        <position position="12"/>
    </location>
</feature>
<feature type="sequence conflict" description="In Ref. 3; BAB23088." evidence="3" ref="3">
    <original>G</original>
    <variation>D</variation>
    <location>
        <position position="46"/>
    </location>
</feature>
<evidence type="ECO:0000250" key="1">
    <source>
        <dbReference type="UniProtKB" id="Q8IV03"/>
    </source>
</evidence>
<evidence type="ECO:0000256" key="2">
    <source>
        <dbReference type="SAM" id="MobiDB-lite"/>
    </source>
</evidence>
<evidence type="ECO:0000305" key="3"/>
<name>LUR1L_MOUSE</name>
<gene>
    <name type="primary">Lurap1l</name>
    <name type="synonym">D4Bwg0951e</name>
</gene>
<organism>
    <name type="scientific">Mus musculus</name>
    <name type="common">Mouse</name>
    <dbReference type="NCBI Taxonomy" id="10090"/>
    <lineage>
        <taxon>Eukaryota</taxon>
        <taxon>Metazoa</taxon>
        <taxon>Chordata</taxon>
        <taxon>Craniata</taxon>
        <taxon>Vertebrata</taxon>
        <taxon>Euteleostomi</taxon>
        <taxon>Mammalia</taxon>
        <taxon>Eutheria</taxon>
        <taxon>Euarchontoglires</taxon>
        <taxon>Glires</taxon>
        <taxon>Rodentia</taxon>
        <taxon>Myomorpha</taxon>
        <taxon>Muroidea</taxon>
        <taxon>Muridae</taxon>
        <taxon>Murinae</taxon>
        <taxon>Mus</taxon>
        <taxon>Mus</taxon>
    </lineage>
</organism>
<proteinExistence type="evidence at protein level"/>